<feature type="chain" id="PRO_0000157194" description="Putative septation protein SpoVG">
    <location>
        <begin position="1"/>
        <end position="90"/>
    </location>
</feature>
<reference key="1">
    <citation type="journal article" date="2002" name="Proc. Natl. Acad. Sci. U.S.A.">
        <title>Complete genome sequence of Clostridium perfringens, an anaerobic flesh-eater.</title>
        <authorList>
            <person name="Shimizu T."/>
            <person name="Ohtani K."/>
            <person name="Hirakawa H."/>
            <person name="Ohshima K."/>
            <person name="Yamashita A."/>
            <person name="Shiba T."/>
            <person name="Ogasawara N."/>
            <person name="Hattori M."/>
            <person name="Kuhara S."/>
            <person name="Hayashi H."/>
        </authorList>
    </citation>
    <scope>NUCLEOTIDE SEQUENCE [LARGE SCALE GENOMIC DNA]</scope>
    <source>
        <strain>13 / Type A</strain>
    </source>
</reference>
<name>SP5G_CLOPE</name>
<comment type="function">
    <text evidence="1">Could be involved in septation.</text>
</comment>
<comment type="similarity">
    <text evidence="1">Belongs to the SpoVG family.</text>
</comment>
<keyword id="KW-0131">Cell cycle</keyword>
<keyword id="KW-0132">Cell division</keyword>
<keyword id="KW-1185">Reference proteome</keyword>
<keyword id="KW-0717">Septation</keyword>
<dbReference type="EMBL" id="BA000016">
    <property type="protein sequence ID" value="BAB82197.1"/>
    <property type="molecule type" value="Genomic_DNA"/>
</dbReference>
<dbReference type="RefSeq" id="WP_003450704.1">
    <property type="nucleotide sequence ID" value="NC_003366.1"/>
</dbReference>
<dbReference type="SMR" id="Q8XHJ2"/>
<dbReference type="STRING" id="195102.gene:10491825"/>
<dbReference type="GeneID" id="93000905"/>
<dbReference type="KEGG" id="cpe:CPE2491"/>
<dbReference type="HOGENOM" id="CLU_103669_2_0_9"/>
<dbReference type="Proteomes" id="UP000000818">
    <property type="component" value="Chromosome"/>
</dbReference>
<dbReference type="GO" id="GO:0000917">
    <property type="term" value="P:division septum assembly"/>
    <property type="evidence" value="ECO:0007669"/>
    <property type="project" value="UniProtKB-KW"/>
</dbReference>
<dbReference type="GO" id="GO:0030435">
    <property type="term" value="P:sporulation resulting in formation of a cellular spore"/>
    <property type="evidence" value="ECO:0007669"/>
    <property type="project" value="InterPro"/>
</dbReference>
<dbReference type="Gene3D" id="3.30.1120.40">
    <property type="entry name" value="Stage V sporulation protein G"/>
    <property type="match status" value="1"/>
</dbReference>
<dbReference type="HAMAP" id="MF_00819">
    <property type="entry name" value="SpoVG"/>
    <property type="match status" value="1"/>
</dbReference>
<dbReference type="InterPro" id="IPR007170">
    <property type="entry name" value="SpoVG"/>
</dbReference>
<dbReference type="InterPro" id="IPR036751">
    <property type="entry name" value="SpoVG_sf"/>
</dbReference>
<dbReference type="NCBIfam" id="NF009749">
    <property type="entry name" value="PRK13259.1"/>
    <property type="match status" value="1"/>
</dbReference>
<dbReference type="PANTHER" id="PTHR38429">
    <property type="entry name" value="SEPTATION PROTEIN SPOVG-RELATED"/>
    <property type="match status" value="1"/>
</dbReference>
<dbReference type="PANTHER" id="PTHR38429:SF1">
    <property type="entry name" value="SEPTATION PROTEIN SPOVG-RELATED"/>
    <property type="match status" value="1"/>
</dbReference>
<dbReference type="Pfam" id="PF04026">
    <property type="entry name" value="SpoVG"/>
    <property type="match status" value="1"/>
</dbReference>
<dbReference type="SUPFAM" id="SSF160537">
    <property type="entry name" value="SpoVG-like"/>
    <property type="match status" value="1"/>
</dbReference>
<organism>
    <name type="scientific">Clostridium perfringens (strain 13 / Type A)</name>
    <dbReference type="NCBI Taxonomy" id="195102"/>
    <lineage>
        <taxon>Bacteria</taxon>
        <taxon>Bacillati</taxon>
        <taxon>Bacillota</taxon>
        <taxon>Clostridia</taxon>
        <taxon>Eubacteriales</taxon>
        <taxon>Clostridiaceae</taxon>
        <taxon>Clostridium</taxon>
    </lineage>
</organism>
<accession>Q8XHJ2</accession>
<evidence type="ECO:0000255" key="1">
    <source>
        <dbReference type="HAMAP-Rule" id="MF_00819"/>
    </source>
</evidence>
<proteinExistence type="inferred from homology"/>
<protein>
    <recommendedName>
        <fullName evidence="1">Putative septation protein SpoVG</fullName>
    </recommendedName>
</protein>
<sequence length="90" mass="10299">MNITDVRIRKISAEGKMKAIVSVTFENQFVVHDIKVIEGQNGLFIAMPSRKTPDGEFKDIAHPINTETREQIQKAILDEYEKVKNLDVQE</sequence>
<gene>
    <name evidence="1" type="primary">spoVG</name>
    <name type="ordered locus">CPE2491</name>
</gene>